<feature type="chain" id="PRO_0000362912" description="ATP synthase subunit c, chloroplastic">
    <location>
        <begin position="1"/>
        <end position="81"/>
    </location>
</feature>
<feature type="transmembrane region" description="Helical" evidence="1">
    <location>
        <begin position="3"/>
        <end position="23"/>
    </location>
</feature>
<feature type="transmembrane region" description="Helical" evidence="1">
    <location>
        <begin position="57"/>
        <end position="77"/>
    </location>
</feature>
<feature type="site" description="Reversibly protonated during proton transport" evidence="1">
    <location>
        <position position="61"/>
    </location>
</feature>
<reference key="1">
    <citation type="journal article" date="2007" name="Mol. Phylogenet. Evol.">
        <title>Phylogenetic and evolutionary implications of complete chloroplast genome sequences of four early-diverging angiosperms: Buxus (Buxaceae), Chloranthus (Chloranthaceae), Dioscorea (Dioscoreaceae), and Illicium (Schisandraceae).</title>
        <authorList>
            <person name="Hansen D.R."/>
            <person name="Dastidar S.G."/>
            <person name="Cai Z."/>
            <person name="Penaflor C."/>
            <person name="Kuehl J.V."/>
            <person name="Boore J.L."/>
            <person name="Jansen R.K."/>
        </authorList>
    </citation>
    <scope>NUCLEOTIDE SEQUENCE [LARGE SCALE GENOMIC DNA]</scope>
</reference>
<evidence type="ECO:0000255" key="1">
    <source>
        <dbReference type="HAMAP-Rule" id="MF_01396"/>
    </source>
</evidence>
<dbReference type="EMBL" id="EF380353">
    <property type="protein sequence ID" value="ABR01417.1"/>
    <property type="molecule type" value="Genomic_DNA"/>
</dbReference>
<dbReference type="RefSeq" id="YP_001294339.1">
    <property type="nucleotide sequence ID" value="NC_009601.1"/>
</dbReference>
<dbReference type="SMR" id="A6MMJ4"/>
<dbReference type="GeneID" id="5236616"/>
<dbReference type="GO" id="GO:0009535">
    <property type="term" value="C:chloroplast thylakoid membrane"/>
    <property type="evidence" value="ECO:0007669"/>
    <property type="project" value="UniProtKB-SubCell"/>
</dbReference>
<dbReference type="GO" id="GO:0045259">
    <property type="term" value="C:proton-transporting ATP synthase complex"/>
    <property type="evidence" value="ECO:0007669"/>
    <property type="project" value="UniProtKB-KW"/>
</dbReference>
<dbReference type="GO" id="GO:0033177">
    <property type="term" value="C:proton-transporting two-sector ATPase complex, proton-transporting domain"/>
    <property type="evidence" value="ECO:0007669"/>
    <property type="project" value="InterPro"/>
</dbReference>
<dbReference type="GO" id="GO:0008289">
    <property type="term" value="F:lipid binding"/>
    <property type="evidence" value="ECO:0007669"/>
    <property type="project" value="UniProtKB-KW"/>
</dbReference>
<dbReference type="GO" id="GO:0046933">
    <property type="term" value="F:proton-transporting ATP synthase activity, rotational mechanism"/>
    <property type="evidence" value="ECO:0007669"/>
    <property type="project" value="UniProtKB-UniRule"/>
</dbReference>
<dbReference type="CDD" id="cd18183">
    <property type="entry name" value="ATP-synt_Fo_c_ATPH"/>
    <property type="match status" value="1"/>
</dbReference>
<dbReference type="FunFam" id="1.20.20.10:FF:000001">
    <property type="entry name" value="ATP synthase subunit c, chloroplastic"/>
    <property type="match status" value="1"/>
</dbReference>
<dbReference type="Gene3D" id="1.20.20.10">
    <property type="entry name" value="F1F0 ATP synthase subunit C"/>
    <property type="match status" value="1"/>
</dbReference>
<dbReference type="HAMAP" id="MF_01396">
    <property type="entry name" value="ATP_synth_c_bact"/>
    <property type="match status" value="1"/>
</dbReference>
<dbReference type="InterPro" id="IPR005953">
    <property type="entry name" value="ATP_synth_csu_bac/chlpt"/>
</dbReference>
<dbReference type="InterPro" id="IPR000454">
    <property type="entry name" value="ATP_synth_F0_csu"/>
</dbReference>
<dbReference type="InterPro" id="IPR020537">
    <property type="entry name" value="ATP_synth_F0_csu_DDCD_BS"/>
</dbReference>
<dbReference type="InterPro" id="IPR038662">
    <property type="entry name" value="ATP_synth_F0_csu_sf"/>
</dbReference>
<dbReference type="InterPro" id="IPR002379">
    <property type="entry name" value="ATPase_proteolipid_c-like_dom"/>
</dbReference>
<dbReference type="InterPro" id="IPR035921">
    <property type="entry name" value="F/V-ATP_Csub_sf"/>
</dbReference>
<dbReference type="NCBIfam" id="TIGR01260">
    <property type="entry name" value="ATP_synt_c"/>
    <property type="match status" value="1"/>
</dbReference>
<dbReference type="NCBIfam" id="NF005608">
    <property type="entry name" value="PRK07354.1"/>
    <property type="match status" value="1"/>
</dbReference>
<dbReference type="PANTHER" id="PTHR10031">
    <property type="entry name" value="ATP SYNTHASE LIPID-BINDING PROTEIN, MITOCHONDRIAL"/>
    <property type="match status" value="1"/>
</dbReference>
<dbReference type="PANTHER" id="PTHR10031:SF0">
    <property type="entry name" value="ATPASE PROTEIN 9"/>
    <property type="match status" value="1"/>
</dbReference>
<dbReference type="Pfam" id="PF00137">
    <property type="entry name" value="ATP-synt_C"/>
    <property type="match status" value="1"/>
</dbReference>
<dbReference type="PRINTS" id="PR00124">
    <property type="entry name" value="ATPASEC"/>
</dbReference>
<dbReference type="SUPFAM" id="SSF81333">
    <property type="entry name" value="F1F0 ATP synthase subunit C"/>
    <property type="match status" value="1"/>
</dbReference>
<dbReference type="PROSITE" id="PS00605">
    <property type="entry name" value="ATPASE_C"/>
    <property type="match status" value="1"/>
</dbReference>
<comment type="function">
    <text evidence="1">F(1)F(0) ATP synthase produces ATP from ADP in the presence of a proton or sodium gradient. F-type ATPases consist of two structural domains, F(1) containing the extramembraneous catalytic core and F(0) containing the membrane proton channel, linked together by a central stalk and a peripheral stalk. During catalysis, ATP synthesis in the catalytic domain of F(1) is coupled via a rotary mechanism of the central stalk subunits to proton translocation.</text>
</comment>
<comment type="function">
    <text evidence="1">Key component of the F(0) channel; it plays a direct role in translocation across the membrane. A homomeric c-ring of between 10-14 subunits forms the central stalk rotor element with the F(1) delta and epsilon subunits.</text>
</comment>
<comment type="subunit">
    <text evidence="1">F-type ATPases have 2 components, F(1) - the catalytic core - and F(0) - the membrane proton channel. F(1) has five subunits: alpha(3), beta(3), gamma(1), delta(1), epsilon(1). F(0) has four main subunits: a(1), b(1), b'(1) and c(10-14). The alpha and beta chains form an alternating ring which encloses part of the gamma chain. F(1) is attached to F(0) by a central stalk formed by the gamma and epsilon chains, while a peripheral stalk is formed by the delta, b and b' chains.</text>
</comment>
<comment type="subcellular location">
    <subcellularLocation>
        <location evidence="1">Plastid</location>
        <location evidence="1">Chloroplast thylakoid membrane</location>
        <topology evidence="1">Multi-pass membrane protein</topology>
    </subcellularLocation>
</comment>
<comment type="miscellaneous">
    <text>In plastids the F-type ATPase is also known as CF(1)CF(0).</text>
</comment>
<comment type="similarity">
    <text evidence="1">Belongs to the ATPase C chain family.</text>
</comment>
<organism>
    <name type="scientific">Dioscorea elephantipes</name>
    <name type="common">Elephant's foot yam</name>
    <name type="synonym">Testudinaria elephantipes</name>
    <dbReference type="NCBI Taxonomy" id="145284"/>
    <lineage>
        <taxon>Eukaryota</taxon>
        <taxon>Viridiplantae</taxon>
        <taxon>Streptophyta</taxon>
        <taxon>Embryophyta</taxon>
        <taxon>Tracheophyta</taxon>
        <taxon>Spermatophyta</taxon>
        <taxon>Magnoliopsida</taxon>
        <taxon>Liliopsida</taxon>
        <taxon>Dioscoreales</taxon>
        <taxon>Dioscoreaceae</taxon>
        <taxon>Dioscorea</taxon>
    </lineage>
</organism>
<protein>
    <recommendedName>
        <fullName evidence="1">ATP synthase subunit c, chloroplastic</fullName>
    </recommendedName>
    <alternativeName>
        <fullName evidence="1">ATP synthase F(0) sector subunit c</fullName>
    </alternativeName>
    <alternativeName>
        <fullName evidence="1">ATPase subunit III</fullName>
    </alternativeName>
    <alternativeName>
        <fullName evidence="1">F-type ATPase subunit c</fullName>
        <shortName evidence="1">F-ATPase subunit c</shortName>
    </alternativeName>
    <alternativeName>
        <fullName evidence="1">Lipid-binding protein</fullName>
    </alternativeName>
</protein>
<proteinExistence type="inferred from homology"/>
<sequence>MNPLISAASVIAAGLAVGLASIGPGVGQGTAAGQAVEGIARQPEAEGKIRGTLLLSLAFMEALTIYGLVVALALLFANPFV</sequence>
<accession>A6MMJ4</accession>
<name>ATPH_DIOEL</name>
<gene>
    <name evidence="1" type="primary">atpH</name>
</gene>
<geneLocation type="chloroplast"/>
<keyword id="KW-0066">ATP synthesis</keyword>
<keyword id="KW-0138">CF(0)</keyword>
<keyword id="KW-0150">Chloroplast</keyword>
<keyword id="KW-0375">Hydrogen ion transport</keyword>
<keyword id="KW-0406">Ion transport</keyword>
<keyword id="KW-0446">Lipid-binding</keyword>
<keyword id="KW-0472">Membrane</keyword>
<keyword id="KW-0934">Plastid</keyword>
<keyword id="KW-0793">Thylakoid</keyword>
<keyword id="KW-0812">Transmembrane</keyword>
<keyword id="KW-1133">Transmembrane helix</keyword>
<keyword id="KW-0813">Transport</keyword>